<organism>
    <name type="scientific">Campylobacter jejuni (strain RM1221)</name>
    <dbReference type="NCBI Taxonomy" id="195099"/>
    <lineage>
        <taxon>Bacteria</taxon>
        <taxon>Pseudomonadati</taxon>
        <taxon>Campylobacterota</taxon>
        <taxon>Epsilonproteobacteria</taxon>
        <taxon>Campylobacterales</taxon>
        <taxon>Campylobacteraceae</taxon>
        <taxon>Campylobacter</taxon>
    </lineage>
</organism>
<reference key="1">
    <citation type="journal article" date="2005" name="PLoS Biol.">
        <title>Major structural differences and novel potential virulence mechanisms from the genomes of multiple Campylobacter species.</title>
        <authorList>
            <person name="Fouts D.E."/>
            <person name="Mongodin E.F."/>
            <person name="Mandrell R.E."/>
            <person name="Miller W.G."/>
            <person name="Rasko D.A."/>
            <person name="Ravel J."/>
            <person name="Brinkac L.M."/>
            <person name="DeBoy R.T."/>
            <person name="Parker C.T."/>
            <person name="Daugherty S.C."/>
            <person name="Dodson R.J."/>
            <person name="Durkin A.S."/>
            <person name="Madupu R."/>
            <person name="Sullivan S.A."/>
            <person name="Shetty J.U."/>
            <person name="Ayodeji M.A."/>
            <person name="Shvartsbeyn A."/>
            <person name="Schatz M.C."/>
            <person name="Badger J.H."/>
            <person name="Fraser C.M."/>
            <person name="Nelson K.E."/>
        </authorList>
    </citation>
    <scope>NUCLEOTIDE SEQUENCE [LARGE SCALE GENOMIC DNA]</scope>
    <source>
        <strain>RM1221</strain>
    </source>
</reference>
<name>CH60_CAMJR</name>
<comment type="function">
    <text evidence="1">Together with its co-chaperonin GroES, plays an essential role in assisting protein folding. The GroEL-GroES system forms a nano-cage that allows encapsulation of the non-native substrate proteins and provides a physical environment optimized to promote and accelerate protein folding.</text>
</comment>
<comment type="catalytic activity">
    <reaction evidence="1">
        <text>ATP + H2O + a folded polypeptide = ADP + phosphate + an unfolded polypeptide.</text>
        <dbReference type="EC" id="5.6.1.7"/>
    </reaction>
</comment>
<comment type="subunit">
    <text evidence="1">Forms a cylinder of 14 subunits composed of two heptameric rings stacked back-to-back. Interacts with the co-chaperonin GroES.</text>
</comment>
<comment type="subcellular location">
    <subcellularLocation>
        <location evidence="1">Cytoplasm</location>
    </subcellularLocation>
</comment>
<comment type="similarity">
    <text evidence="1">Belongs to the chaperonin (HSP60) family.</text>
</comment>
<dbReference type="EC" id="5.6.1.7" evidence="1"/>
<dbReference type="EMBL" id="CP000025">
    <property type="protein sequence ID" value="AAW35676.1"/>
    <property type="molecule type" value="Genomic_DNA"/>
</dbReference>
<dbReference type="RefSeq" id="WP_002860445.1">
    <property type="nucleotide sequence ID" value="NC_003912.7"/>
</dbReference>
<dbReference type="SMR" id="Q5HTP2"/>
<dbReference type="KEGG" id="cjr:CJE1356"/>
<dbReference type="HOGENOM" id="CLU_016503_3_0_7"/>
<dbReference type="GO" id="GO:0005737">
    <property type="term" value="C:cytoplasm"/>
    <property type="evidence" value="ECO:0007669"/>
    <property type="project" value="UniProtKB-SubCell"/>
</dbReference>
<dbReference type="GO" id="GO:0005524">
    <property type="term" value="F:ATP binding"/>
    <property type="evidence" value="ECO:0007669"/>
    <property type="project" value="UniProtKB-UniRule"/>
</dbReference>
<dbReference type="GO" id="GO:0140662">
    <property type="term" value="F:ATP-dependent protein folding chaperone"/>
    <property type="evidence" value="ECO:0007669"/>
    <property type="project" value="InterPro"/>
</dbReference>
<dbReference type="GO" id="GO:0016853">
    <property type="term" value="F:isomerase activity"/>
    <property type="evidence" value="ECO:0007669"/>
    <property type="project" value="UniProtKB-KW"/>
</dbReference>
<dbReference type="GO" id="GO:0051082">
    <property type="term" value="F:unfolded protein binding"/>
    <property type="evidence" value="ECO:0007669"/>
    <property type="project" value="UniProtKB-UniRule"/>
</dbReference>
<dbReference type="GO" id="GO:0042026">
    <property type="term" value="P:protein refolding"/>
    <property type="evidence" value="ECO:0007669"/>
    <property type="project" value="UniProtKB-UniRule"/>
</dbReference>
<dbReference type="CDD" id="cd03344">
    <property type="entry name" value="GroEL"/>
    <property type="match status" value="1"/>
</dbReference>
<dbReference type="FunFam" id="3.50.7.10:FF:000001">
    <property type="entry name" value="60 kDa chaperonin"/>
    <property type="match status" value="1"/>
</dbReference>
<dbReference type="Gene3D" id="3.50.7.10">
    <property type="entry name" value="GroEL"/>
    <property type="match status" value="1"/>
</dbReference>
<dbReference type="Gene3D" id="1.10.560.10">
    <property type="entry name" value="GroEL-like equatorial domain"/>
    <property type="match status" value="1"/>
</dbReference>
<dbReference type="Gene3D" id="3.30.260.10">
    <property type="entry name" value="TCP-1-like chaperonin intermediate domain"/>
    <property type="match status" value="1"/>
</dbReference>
<dbReference type="HAMAP" id="MF_00600">
    <property type="entry name" value="CH60"/>
    <property type="match status" value="1"/>
</dbReference>
<dbReference type="InterPro" id="IPR018370">
    <property type="entry name" value="Chaperonin_Cpn60_CS"/>
</dbReference>
<dbReference type="InterPro" id="IPR001844">
    <property type="entry name" value="Cpn60/GroEL"/>
</dbReference>
<dbReference type="InterPro" id="IPR002423">
    <property type="entry name" value="Cpn60/GroEL/TCP-1"/>
</dbReference>
<dbReference type="InterPro" id="IPR027409">
    <property type="entry name" value="GroEL-like_apical_dom_sf"/>
</dbReference>
<dbReference type="InterPro" id="IPR027413">
    <property type="entry name" value="GROEL-like_equatorial_sf"/>
</dbReference>
<dbReference type="InterPro" id="IPR027410">
    <property type="entry name" value="TCP-1-like_intermed_sf"/>
</dbReference>
<dbReference type="NCBIfam" id="TIGR02348">
    <property type="entry name" value="GroEL"/>
    <property type="match status" value="1"/>
</dbReference>
<dbReference type="NCBIfam" id="NF000592">
    <property type="entry name" value="PRK00013.1"/>
    <property type="match status" value="1"/>
</dbReference>
<dbReference type="NCBIfam" id="NF009487">
    <property type="entry name" value="PRK12849.1"/>
    <property type="match status" value="1"/>
</dbReference>
<dbReference type="NCBIfam" id="NF009488">
    <property type="entry name" value="PRK12850.1"/>
    <property type="match status" value="1"/>
</dbReference>
<dbReference type="NCBIfam" id="NF009489">
    <property type="entry name" value="PRK12851.1"/>
    <property type="match status" value="1"/>
</dbReference>
<dbReference type="PANTHER" id="PTHR45633">
    <property type="entry name" value="60 KDA HEAT SHOCK PROTEIN, MITOCHONDRIAL"/>
    <property type="match status" value="1"/>
</dbReference>
<dbReference type="Pfam" id="PF00118">
    <property type="entry name" value="Cpn60_TCP1"/>
    <property type="match status" value="1"/>
</dbReference>
<dbReference type="PRINTS" id="PR00298">
    <property type="entry name" value="CHAPERONIN60"/>
</dbReference>
<dbReference type="SUPFAM" id="SSF52029">
    <property type="entry name" value="GroEL apical domain-like"/>
    <property type="match status" value="1"/>
</dbReference>
<dbReference type="SUPFAM" id="SSF48592">
    <property type="entry name" value="GroEL equatorial domain-like"/>
    <property type="match status" value="1"/>
</dbReference>
<dbReference type="SUPFAM" id="SSF54849">
    <property type="entry name" value="GroEL-intermediate domain like"/>
    <property type="match status" value="1"/>
</dbReference>
<dbReference type="PROSITE" id="PS00296">
    <property type="entry name" value="CHAPERONINS_CPN60"/>
    <property type="match status" value="1"/>
</dbReference>
<gene>
    <name evidence="1" type="primary">groEL</name>
    <name evidence="1" type="synonym">groL</name>
    <name type="ordered locus">CJE1356</name>
</gene>
<evidence type="ECO:0000255" key="1">
    <source>
        <dbReference type="HAMAP-Rule" id="MF_00600"/>
    </source>
</evidence>
<sequence>MAKEIIFSDEARNKLYEGVKKLNDAVKVTMGPRGRNVLIQKSFGAPSITKDGVSVAKEVELKDSLENMGASLVREVASKTADQAGDGTTTATVLAHAIFKEGLRNITAGANPIEVKRGMDKACEAIVAELKKLSREVKDKKEIAQVATISANSDEKIGNLIADAMEKVGKDGVITVEEAKSINDELNVVEGMQFDRGYLSPYFITNAEKMTVELSSPYILLFDKKIANLKDLLPVLEQIQKTGKPLLIIAEDIEGEALATLVVNKLRGVLNISAVKAPGFGDRRKAMLEDIAILTGGEVISEELGRTLESATIQDLGQASSVIIDKDNTTIVNGAGEKANIDARVNQIKAQIAETTSDYDREKLQERLAKLSGGVAVIKVGAATETEMKEKKDRVDDALSATKAAVEEGIVIGGGAALIKAKAKIKLDLQGDEAIGAAIVERALRAPLRQIAENAGFDAGVVVNSVENAKDENTGFDAAKGEYVNMLESGIIDPVKVERVALLNAVSVASMLLTTEATISEIKEDKPTMPDMSGMGGMGGMGGMM</sequence>
<accession>Q5HTP2</accession>
<keyword id="KW-0067">ATP-binding</keyword>
<keyword id="KW-0143">Chaperone</keyword>
<keyword id="KW-0963">Cytoplasm</keyword>
<keyword id="KW-0413">Isomerase</keyword>
<keyword id="KW-0547">Nucleotide-binding</keyword>
<proteinExistence type="inferred from homology"/>
<protein>
    <recommendedName>
        <fullName evidence="1">Chaperonin GroEL</fullName>
        <ecNumber evidence="1">5.6.1.7</ecNumber>
    </recommendedName>
    <alternativeName>
        <fullName evidence="1">60 kDa chaperonin</fullName>
    </alternativeName>
    <alternativeName>
        <fullName evidence="1">Chaperonin-60</fullName>
        <shortName evidence="1">Cpn60</shortName>
    </alternativeName>
</protein>
<feature type="chain" id="PRO_0000063323" description="Chaperonin GroEL">
    <location>
        <begin position="1"/>
        <end position="545"/>
    </location>
</feature>
<feature type="binding site" evidence="1">
    <location>
        <begin position="29"/>
        <end position="32"/>
    </location>
    <ligand>
        <name>ATP</name>
        <dbReference type="ChEBI" id="CHEBI:30616"/>
    </ligand>
</feature>
<feature type="binding site" evidence="1">
    <location>
        <position position="50"/>
    </location>
    <ligand>
        <name>ATP</name>
        <dbReference type="ChEBI" id="CHEBI:30616"/>
    </ligand>
</feature>
<feature type="binding site" evidence="1">
    <location>
        <begin position="86"/>
        <end position="90"/>
    </location>
    <ligand>
        <name>ATP</name>
        <dbReference type="ChEBI" id="CHEBI:30616"/>
    </ligand>
</feature>
<feature type="binding site" evidence="1">
    <location>
        <position position="414"/>
    </location>
    <ligand>
        <name>ATP</name>
        <dbReference type="ChEBI" id="CHEBI:30616"/>
    </ligand>
</feature>
<feature type="binding site" evidence="1">
    <location>
        <begin position="477"/>
        <end position="479"/>
    </location>
    <ligand>
        <name>ATP</name>
        <dbReference type="ChEBI" id="CHEBI:30616"/>
    </ligand>
</feature>
<feature type="binding site" evidence="1">
    <location>
        <position position="493"/>
    </location>
    <ligand>
        <name>ATP</name>
        <dbReference type="ChEBI" id="CHEBI:30616"/>
    </ligand>
</feature>